<sequence>MSKALIKFIRLSPTKARLIAREVRGMNAELAMASLKFMPNKGAKYIANAISSAVANGGFEANEVIVKSCRVDAAAVLKRFRPRARGSASRIRKPTSHILVEVAKAEVKAEEKKTVAKKTTTTKAPAKKTTSTKKATVKKES</sequence>
<keyword id="KW-0687">Ribonucleoprotein</keyword>
<keyword id="KW-0689">Ribosomal protein</keyword>
<keyword id="KW-0694">RNA-binding</keyword>
<keyword id="KW-0699">rRNA-binding</keyword>
<gene>
    <name evidence="1" type="primary">rplV</name>
    <name type="ordered locus">CJE1870</name>
</gene>
<comment type="function">
    <text evidence="1">This protein binds specifically to 23S rRNA; its binding is stimulated by other ribosomal proteins, e.g. L4, L17, and L20. It is important during the early stages of 50S assembly. It makes multiple contacts with different domains of the 23S rRNA in the assembled 50S subunit and ribosome (By similarity).</text>
</comment>
<comment type="function">
    <text evidence="1">The globular domain of the protein is located near the polypeptide exit tunnel on the outside of the subunit, while an extended beta-hairpin is found that lines the wall of the exit tunnel in the center of the 70S ribosome.</text>
</comment>
<comment type="subunit">
    <text evidence="1">Part of the 50S ribosomal subunit.</text>
</comment>
<comment type="similarity">
    <text evidence="1">Belongs to the universal ribosomal protein uL22 family.</text>
</comment>
<reference key="1">
    <citation type="journal article" date="2005" name="PLoS Biol.">
        <title>Major structural differences and novel potential virulence mechanisms from the genomes of multiple Campylobacter species.</title>
        <authorList>
            <person name="Fouts D.E."/>
            <person name="Mongodin E.F."/>
            <person name="Mandrell R.E."/>
            <person name="Miller W.G."/>
            <person name="Rasko D.A."/>
            <person name="Ravel J."/>
            <person name="Brinkac L.M."/>
            <person name="DeBoy R.T."/>
            <person name="Parker C.T."/>
            <person name="Daugherty S.C."/>
            <person name="Dodson R.J."/>
            <person name="Durkin A.S."/>
            <person name="Madupu R."/>
            <person name="Sullivan S.A."/>
            <person name="Shetty J.U."/>
            <person name="Ayodeji M.A."/>
            <person name="Shvartsbeyn A."/>
            <person name="Schatz M.C."/>
            <person name="Badger J.H."/>
            <person name="Fraser C.M."/>
            <person name="Nelson K.E."/>
        </authorList>
    </citation>
    <scope>NUCLEOTIDE SEQUENCE [LARGE SCALE GENOMIC DNA]</scope>
    <source>
        <strain>RM1221</strain>
    </source>
</reference>
<accession>Q5HS95</accession>
<proteinExistence type="inferred from homology"/>
<evidence type="ECO:0000255" key="1">
    <source>
        <dbReference type="HAMAP-Rule" id="MF_01331"/>
    </source>
</evidence>
<evidence type="ECO:0000256" key="2">
    <source>
        <dbReference type="SAM" id="MobiDB-lite"/>
    </source>
</evidence>
<evidence type="ECO:0000305" key="3"/>
<dbReference type="EMBL" id="CP000025">
    <property type="protein sequence ID" value="AAW36292.1"/>
    <property type="molecule type" value="Genomic_DNA"/>
</dbReference>
<dbReference type="RefSeq" id="WP_002867519.1">
    <property type="nucleotide sequence ID" value="NC_003912.7"/>
</dbReference>
<dbReference type="SMR" id="Q5HS95"/>
<dbReference type="KEGG" id="cjr:CJE1870"/>
<dbReference type="HOGENOM" id="CLU_083987_3_2_7"/>
<dbReference type="GO" id="GO:0022625">
    <property type="term" value="C:cytosolic large ribosomal subunit"/>
    <property type="evidence" value="ECO:0007669"/>
    <property type="project" value="TreeGrafter"/>
</dbReference>
<dbReference type="GO" id="GO:0019843">
    <property type="term" value="F:rRNA binding"/>
    <property type="evidence" value="ECO:0007669"/>
    <property type="project" value="UniProtKB-UniRule"/>
</dbReference>
<dbReference type="GO" id="GO:0003735">
    <property type="term" value="F:structural constituent of ribosome"/>
    <property type="evidence" value="ECO:0007669"/>
    <property type="project" value="InterPro"/>
</dbReference>
<dbReference type="GO" id="GO:0006412">
    <property type="term" value="P:translation"/>
    <property type="evidence" value="ECO:0007669"/>
    <property type="project" value="UniProtKB-UniRule"/>
</dbReference>
<dbReference type="CDD" id="cd00336">
    <property type="entry name" value="Ribosomal_L22"/>
    <property type="match status" value="1"/>
</dbReference>
<dbReference type="FunFam" id="3.90.470.10:FF:000007">
    <property type="entry name" value="50S ribosomal protein L22"/>
    <property type="match status" value="1"/>
</dbReference>
<dbReference type="Gene3D" id="3.90.470.10">
    <property type="entry name" value="Ribosomal protein L22/L17"/>
    <property type="match status" value="1"/>
</dbReference>
<dbReference type="HAMAP" id="MF_01331_B">
    <property type="entry name" value="Ribosomal_uL22_B"/>
    <property type="match status" value="1"/>
</dbReference>
<dbReference type="InterPro" id="IPR001063">
    <property type="entry name" value="Ribosomal_uL22"/>
</dbReference>
<dbReference type="InterPro" id="IPR005727">
    <property type="entry name" value="Ribosomal_uL22_bac/chlpt-type"/>
</dbReference>
<dbReference type="InterPro" id="IPR047867">
    <property type="entry name" value="Ribosomal_uL22_bac/org-type"/>
</dbReference>
<dbReference type="InterPro" id="IPR018260">
    <property type="entry name" value="Ribosomal_uL22_CS"/>
</dbReference>
<dbReference type="InterPro" id="IPR036394">
    <property type="entry name" value="Ribosomal_uL22_sf"/>
</dbReference>
<dbReference type="NCBIfam" id="TIGR01044">
    <property type="entry name" value="rplV_bact"/>
    <property type="match status" value="1"/>
</dbReference>
<dbReference type="PANTHER" id="PTHR13501">
    <property type="entry name" value="CHLOROPLAST 50S RIBOSOMAL PROTEIN L22-RELATED"/>
    <property type="match status" value="1"/>
</dbReference>
<dbReference type="PANTHER" id="PTHR13501:SF8">
    <property type="entry name" value="LARGE RIBOSOMAL SUBUNIT PROTEIN UL22M"/>
    <property type="match status" value="1"/>
</dbReference>
<dbReference type="Pfam" id="PF00237">
    <property type="entry name" value="Ribosomal_L22"/>
    <property type="match status" value="1"/>
</dbReference>
<dbReference type="SUPFAM" id="SSF54843">
    <property type="entry name" value="Ribosomal protein L22"/>
    <property type="match status" value="1"/>
</dbReference>
<dbReference type="PROSITE" id="PS00464">
    <property type="entry name" value="RIBOSOMAL_L22"/>
    <property type="match status" value="1"/>
</dbReference>
<organism>
    <name type="scientific">Campylobacter jejuni (strain RM1221)</name>
    <dbReference type="NCBI Taxonomy" id="195099"/>
    <lineage>
        <taxon>Bacteria</taxon>
        <taxon>Pseudomonadati</taxon>
        <taxon>Campylobacterota</taxon>
        <taxon>Epsilonproteobacteria</taxon>
        <taxon>Campylobacterales</taxon>
        <taxon>Campylobacteraceae</taxon>
        <taxon>Campylobacter</taxon>
    </lineage>
</organism>
<protein>
    <recommendedName>
        <fullName evidence="1">Large ribosomal subunit protein uL22</fullName>
    </recommendedName>
    <alternativeName>
        <fullName evidence="3">50S ribosomal protein L22</fullName>
    </alternativeName>
</protein>
<name>RL22_CAMJR</name>
<feature type="chain" id="PRO_0000243135" description="Large ribosomal subunit protein uL22">
    <location>
        <begin position="1"/>
        <end position="141"/>
    </location>
</feature>
<feature type="region of interest" description="Disordered" evidence="2">
    <location>
        <begin position="110"/>
        <end position="141"/>
    </location>
</feature>
<feature type="compositionally biased region" description="Low complexity" evidence="2">
    <location>
        <begin position="117"/>
        <end position="134"/>
    </location>
</feature>